<name>MTM6_METJA</name>
<feature type="chain" id="PRO_0000087939" description="Type II methyltransferase M.MjaVI">
    <location>
        <begin position="1"/>
        <end position="194"/>
    </location>
</feature>
<accession>Q58606</accession>
<proteinExistence type="inferred from homology"/>
<gene>
    <name type="primary">mjaVIM</name>
    <name type="ordered locus">MJ1209</name>
</gene>
<sequence length="194" mass="22461">MKVIIVKIWNKINGITLINDDFLNVDLPNESIDLIVTSPPYNVGIDYNQHDDTIPYEEYLDWTKQWLKKALTLLKKDGRLCLNIPLDKNKGGIKPVYADIVKIALDVGFKYQTTIIWNEQNISRRTAWGSFMSASAPYVIAPVETIVVLYKESWKKLSKGESDITKEEFIEWTNGLWTFPGESKKELDIQHHFR</sequence>
<comment type="function">
    <text evidence="1 2">A beta subtype methylase that recognizes the double-stranded sequence 5'-CCGG-3', methylates C-1 on both strands, and protects the DNA from cleavage by the MjaVI endonuclease.</text>
</comment>
<comment type="catalytic activity">
    <reaction>
        <text>a 2'-deoxycytidine in DNA + S-adenosyl-L-methionine = an N(4)-methyl-2'-deoxycytidine in DNA + S-adenosyl-L-homocysteine + H(+)</text>
        <dbReference type="Rhea" id="RHEA:16857"/>
        <dbReference type="Rhea" id="RHEA-COMP:11369"/>
        <dbReference type="Rhea" id="RHEA-COMP:13674"/>
        <dbReference type="ChEBI" id="CHEBI:15378"/>
        <dbReference type="ChEBI" id="CHEBI:57856"/>
        <dbReference type="ChEBI" id="CHEBI:59789"/>
        <dbReference type="ChEBI" id="CHEBI:85452"/>
        <dbReference type="ChEBI" id="CHEBI:137933"/>
        <dbReference type="EC" id="2.1.1.113"/>
    </reaction>
</comment>
<comment type="similarity">
    <text evidence="2">Belongs to the N(4)/N(6)-methyltransferase family. N(4) subfamily.</text>
</comment>
<dbReference type="EC" id="2.1.1.113"/>
<dbReference type="EMBL" id="L77117">
    <property type="protein sequence ID" value="AAB99220.1"/>
    <property type="molecule type" value="Genomic_DNA"/>
</dbReference>
<dbReference type="SMR" id="Q58606"/>
<dbReference type="FunCoup" id="Q58606">
    <property type="interactions" value="1"/>
</dbReference>
<dbReference type="STRING" id="243232.MJ_1209"/>
<dbReference type="REBASE" id="3893">
    <property type="entry name" value="M.MjaVI"/>
</dbReference>
<dbReference type="PaxDb" id="243232-MJ_1209"/>
<dbReference type="EnsemblBacteria" id="AAB99220">
    <property type="protein sequence ID" value="AAB99220"/>
    <property type="gene ID" value="MJ_1209"/>
</dbReference>
<dbReference type="KEGG" id="mja:MJ_1209"/>
<dbReference type="eggNOG" id="arCOG00115">
    <property type="taxonomic scope" value="Archaea"/>
</dbReference>
<dbReference type="HOGENOM" id="CLU_1399756_0_0_2"/>
<dbReference type="InParanoid" id="Q58606"/>
<dbReference type="PhylomeDB" id="Q58606"/>
<dbReference type="PRO" id="PR:Q58606"/>
<dbReference type="Proteomes" id="UP000000805">
    <property type="component" value="Chromosome"/>
</dbReference>
<dbReference type="GO" id="GO:0003677">
    <property type="term" value="F:DNA binding"/>
    <property type="evidence" value="ECO:0007669"/>
    <property type="project" value="UniProtKB-KW"/>
</dbReference>
<dbReference type="GO" id="GO:0008170">
    <property type="term" value="F:N-methyltransferase activity"/>
    <property type="evidence" value="ECO:0007669"/>
    <property type="project" value="InterPro"/>
</dbReference>
<dbReference type="GO" id="GO:0015667">
    <property type="term" value="F:site-specific DNA-methyltransferase (cytosine-N4-specific) activity"/>
    <property type="evidence" value="ECO:0007669"/>
    <property type="project" value="UniProtKB-EC"/>
</dbReference>
<dbReference type="GO" id="GO:0009307">
    <property type="term" value="P:DNA restriction-modification system"/>
    <property type="evidence" value="ECO:0007669"/>
    <property type="project" value="UniProtKB-KW"/>
</dbReference>
<dbReference type="GO" id="GO:0032259">
    <property type="term" value="P:methylation"/>
    <property type="evidence" value="ECO:0007669"/>
    <property type="project" value="UniProtKB-KW"/>
</dbReference>
<dbReference type="Gene3D" id="3.40.50.150">
    <property type="entry name" value="Vaccinia Virus protein VP39"/>
    <property type="match status" value="1"/>
</dbReference>
<dbReference type="InterPro" id="IPR002941">
    <property type="entry name" value="DNA_methylase_N4/N6"/>
</dbReference>
<dbReference type="InterPro" id="IPR017985">
    <property type="entry name" value="MeTrfase_CN4_CS"/>
</dbReference>
<dbReference type="InterPro" id="IPR001091">
    <property type="entry name" value="RM_Methyltransferase"/>
</dbReference>
<dbReference type="InterPro" id="IPR029063">
    <property type="entry name" value="SAM-dependent_MTases_sf"/>
</dbReference>
<dbReference type="Pfam" id="PF01555">
    <property type="entry name" value="N6_N4_Mtase"/>
    <property type="match status" value="1"/>
</dbReference>
<dbReference type="PRINTS" id="PR00508">
    <property type="entry name" value="S21N4MTFRASE"/>
</dbReference>
<dbReference type="SUPFAM" id="SSF53335">
    <property type="entry name" value="S-adenosyl-L-methionine-dependent methyltransferases"/>
    <property type="match status" value="1"/>
</dbReference>
<dbReference type="PROSITE" id="PS00093">
    <property type="entry name" value="N4_MTASE"/>
    <property type="match status" value="1"/>
</dbReference>
<keyword id="KW-0238">DNA-binding</keyword>
<keyword id="KW-0489">Methyltransferase</keyword>
<keyword id="KW-1185">Reference proteome</keyword>
<keyword id="KW-0680">Restriction system</keyword>
<keyword id="KW-0949">S-adenosyl-L-methionine</keyword>
<keyword id="KW-0808">Transferase</keyword>
<protein>
    <recommendedName>
        <fullName evidence="1">Type II methyltransferase M.MjaVI</fullName>
        <shortName evidence="1">M.MjaVI</shortName>
        <ecNumber>2.1.1.113</ecNumber>
    </recommendedName>
    <alternativeName>
        <fullName>N-4 cytosine-specific methyltransferase MjaVI</fullName>
    </alternativeName>
</protein>
<evidence type="ECO:0000303" key="1">
    <source>
    </source>
</evidence>
<evidence type="ECO:0000305" key="2"/>
<reference key="1">
    <citation type="journal article" date="1996" name="Science">
        <title>Complete genome sequence of the methanogenic archaeon, Methanococcus jannaschii.</title>
        <authorList>
            <person name="Bult C.J."/>
            <person name="White O."/>
            <person name="Olsen G.J."/>
            <person name="Zhou L."/>
            <person name="Fleischmann R.D."/>
            <person name="Sutton G.G."/>
            <person name="Blake J.A."/>
            <person name="FitzGerald L.M."/>
            <person name="Clayton R.A."/>
            <person name="Gocayne J.D."/>
            <person name="Kerlavage A.R."/>
            <person name="Dougherty B.A."/>
            <person name="Tomb J.-F."/>
            <person name="Adams M.D."/>
            <person name="Reich C.I."/>
            <person name="Overbeek R."/>
            <person name="Kirkness E.F."/>
            <person name="Weinstock K.G."/>
            <person name="Merrick J.M."/>
            <person name="Glodek A."/>
            <person name="Scott J.L."/>
            <person name="Geoghagen N.S.M."/>
            <person name="Weidman J.F."/>
            <person name="Fuhrmann J.L."/>
            <person name="Nguyen D."/>
            <person name="Utterback T.R."/>
            <person name="Kelley J.M."/>
            <person name="Peterson J.D."/>
            <person name="Sadow P.W."/>
            <person name="Hanna M.C."/>
            <person name="Cotton M.D."/>
            <person name="Roberts K.M."/>
            <person name="Hurst M.A."/>
            <person name="Kaine B.P."/>
            <person name="Borodovsky M."/>
            <person name="Klenk H.-P."/>
            <person name="Fraser C.M."/>
            <person name="Smith H.O."/>
            <person name="Woese C.R."/>
            <person name="Venter J.C."/>
        </authorList>
    </citation>
    <scope>NUCLEOTIDE SEQUENCE [LARGE SCALE GENOMIC DNA]</scope>
    <source>
        <strain>ATCC 43067 / DSM 2661 / JAL-1 / JCM 10045 / NBRC 100440</strain>
    </source>
</reference>
<reference key="2">
    <citation type="journal article" date="2003" name="Nucleic Acids Res.">
        <title>A nomenclature for restriction enzymes, DNA methyltransferases, homing endonucleases and their genes.</title>
        <authorList>
            <person name="Roberts R.J."/>
            <person name="Belfort M."/>
            <person name="Bestor T."/>
            <person name="Bhagwat A.S."/>
            <person name="Bickle T.A."/>
            <person name="Bitinaite J."/>
            <person name="Blumenthal R.M."/>
            <person name="Degtyarev S.K."/>
            <person name="Dryden D.T."/>
            <person name="Dybvig K."/>
            <person name="Firman K."/>
            <person name="Gromova E.S."/>
            <person name="Gumport R.I."/>
            <person name="Halford S.E."/>
            <person name="Hattman S."/>
            <person name="Heitman J."/>
            <person name="Hornby D.P."/>
            <person name="Janulaitis A."/>
            <person name="Jeltsch A."/>
            <person name="Josephsen J."/>
            <person name="Kiss A."/>
            <person name="Klaenhammer T.R."/>
            <person name="Kobayashi I."/>
            <person name="Kong H."/>
            <person name="Krueger D.H."/>
            <person name="Lacks S."/>
            <person name="Marinus M.G."/>
            <person name="Miyahara M."/>
            <person name="Morgan R.D."/>
            <person name="Murray N.E."/>
            <person name="Nagaraja V."/>
            <person name="Piekarowicz A."/>
            <person name="Pingoud A."/>
            <person name="Raleigh E."/>
            <person name="Rao D.N."/>
            <person name="Reich N."/>
            <person name="Repin V.E."/>
            <person name="Selker E.U."/>
            <person name="Shaw P.C."/>
            <person name="Stein D.C."/>
            <person name="Stoddard B.L."/>
            <person name="Szybalski W."/>
            <person name="Trautner T.A."/>
            <person name="Van Etten J.L."/>
            <person name="Vitor J.M."/>
            <person name="Wilson G.G."/>
            <person name="Xu S.Y."/>
        </authorList>
    </citation>
    <scope>NOMENCLATURE</scope>
    <scope>SUBTYPE</scope>
</reference>
<organism>
    <name type="scientific">Methanocaldococcus jannaschii (strain ATCC 43067 / DSM 2661 / JAL-1 / JCM 10045 / NBRC 100440)</name>
    <name type="common">Methanococcus jannaschii</name>
    <dbReference type="NCBI Taxonomy" id="243232"/>
    <lineage>
        <taxon>Archaea</taxon>
        <taxon>Methanobacteriati</taxon>
        <taxon>Methanobacteriota</taxon>
        <taxon>Methanomada group</taxon>
        <taxon>Methanococci</taxon>
        <taxon>Methanococcales</taxon>
        <taxon>Methanocaldococcaceae</taxon>
        <taxon>Methanocaldococcus</taxon>
    </lineage>
</organism>